<gene>
    <name type="primary">Luzp2</name>
</gene>
<proteinExistence type="evidence at transcript level"/>
<accession>Q8BGY3</accession>
<accession>Q7TPB5</accession>
<accession>Q8CBZ7</accession>
<protein>
    <recommendedName>
        <fullName>Leucine zipper protein 2</fullName>
    </recommendedName>
</protein>
<reference key="1">
    <citation type="journal article" date="2003" name="Mamm. Genome">
        <title>Cloning, functional study and comparative mapping of Luzp2 to mouse chromosome 7 and human chromosome 11p13-11p14.</title>
        <authorList>
            <person name="Wu M."/>
            <person name="Michaud E.J."/>
            <person name="Johnson D.K."/>
        </authorList>
    </citation>
    <scope>NUCLEOTIDE SEQUENCE [MRNA]</scope>
    <scope>TISSUE SPECIFICITY</scope>
    <source>
        <strain>C3H/F</strain>
    </source>
</reference>
<reference key="2">
    <citation type="journal article" date="2005" name="Science">
        <title>The transcriptional landscape of the mammalian genome.</title>
        <authorList>
            <person name="Carninci P."/>
            <person name="Kasukawa T."/>
            <person name="Katayama S."/>
            <person name="Gough J."/>
            <person name="Frith M.C."/>
            <person name="Maeda N."/>
            <person name="Oyama R."/>
            <person name="Ravasi T."/>
            <person name="Lenhard B."/>
            <person name="Wells C."/>
            <person name="Kodzius R."/>
            <person name="Shimokawa K."/>
            <person name="Bajic V.B."/>
            <person name="Brenner S.E."/>
            <person name="Batalov S."/>
            <person name="Forrest A.R."/>
            <person name="Zavolan M."/>
            <person name="Davis M.J."/>
            <person name="Wilming L.G."/>
            <person name="Aidinis V."/>
            <person name="Allen J.E."/>
            <person name="Ambesi-Impiombato A."/>
            <person name="Apweiler R."/>
            <person name="Aturaliya R.N."/>
            <person name="Bailey T.L."/>
            <person name="Bansal M."/>
            <person name="Baxter L."/>
            <person name="Beisel K.W."/>
            <person name="Bersano T."/>
            <person name="Bono H."/>
            <person name="Chalk A.M."/>
            <person name="Chiu K.P."/>
            <person name="Choudhary V."/>
            <person name="Christoffels A."/>
            <person name="Clutterbuck D.R."/>
            <person name="Crowe M.L."/>
            <person name="Dalla E."/>
            <person name="Dalrymple B.P."/>
            <person name="de Bono B."/>
            <person name="Della Gatta G."/>
            <person name="di Bernardo D."/>
            <person name="Down T."/>
            <person name="Engstrom P."/>
            <person name="Fagiolini M."/>
            <person name="Faulkner G."/>
            <person name="Fletcher C.F."/>
            <person name="Fukushima T."/>
            <person name="Furuno M."/>
            <person name="Futaki S."/>
            <person name="Gariboldi M."/>
            <person name="Georgii-Hemming P."/>
            <person name="Gingeras T.R."/>
            <person name="Gojobori T."/>
            <person name="Green R.E."/>
            <person name="Gustincich S."/>
            <person name="Harbers M."/>
            <person name="Hayashi Y."/>
            <person name="Hensch T.K."/>
            <person name="Hirokawa N."/>
            <person name="Hill D."/>
            <person name="Huminiecki L."/>
            <person name="Iacono M."/>
            <person name="Ikeo K."/>
            <person name="Iwama A."/>
            <person name="Ishikawa T."/>
            <person name="Jakt M."/>
            <person name="Kanapin A."/>
            <person name="Katoh M."/>
            <person name="Kawasawa Y."/>
            <person name="Kelso J."/>
            <person name="Kitamura H."/>
            <person name="Kitano H."/>
            <person name="Kollias G."/>
            <person name="Krishnan S.P."/>
            <person name="Kruger A."/>
            <person name="Kummerfeld S.K."/>
            <person name="Kurochkin I.V."/>
            <person name="Lareau L.F."/>
            <person name="Lazarevic D."/>
            <person name="Lipovich L."/>
            <person name="Liu J."/>
            <person name="Liuni S."/>
            <person name="McWilliam S."/>
            <person name="Madan Babu M."/>
            <person name="Madera M."/>
            <person name="Marchionni L."/>
            <person name="Matsuda H."/>
            <person name="Matsuzawa S."/>
            <person name="Miki H."/>
            <person name="Mignone F."/>
            <person name="Miyake S."/>
            <person name="Morris K."/>
            <person name="Mottagui-Tabar S."/>
            <person name="Mulder N."/>
            <person name="Nakano N."/>
            <person name="Nakauchi H."/>
            <person name="Ng P."/>
            <person name="Nilsson R."/>
            <person name="Nishiguchi S."/>
            <person name="Nishikawa S."/>
            <person name="Nori F."/>
            <person name="Ohara O."/>
            <person name="Okazaki Y."/>
            <person name="Orlando V."/>
            <person name="Pang K.C."/>
            <person name="Pavan W.J."/>
            <person name="Pavesi G."/>
            <person name="Pesole G."/>
            <person name="Petrovsky N."/>
            <person name="Piazza S."/>
            <person name="Reed J."/>
            <person name="Reid J.F."/>
            <person name="Ring B.Z."/>
            <person name="Ringwald M."/>
            <person name="Rost B."/>
            <person name="Ruan Y."/>
            <person name="Salzberg S.L."/>
            <person name="Sandelin A."/>
            <person name="Schneider C."/>
            <person name="Schoenbach C."/>
            <person name="Sekiguchi K."/>
            <person name="Semple C.A."/>
            <person name="Seno S."/>
            <person name="Sessa L."/>
            <person name="Sheng Y."/>
            <person name="Shibata Y."/>
            <person name="Shimada H."/>
            <person name="Shimada K."/>
            <person name="Silva D."/>
            <person name="Sinclair B."/>
            <person name="Sperling S."/>
            <person name="Stupka E."/>
            <person name="Sugiura K."/>
            <person name="Sultana R."/>
            <person name="Takenaka Y."/>
            <person name="Taki K."/>
            <person name="Tammoja K."/>
            <person name="Tan S.L."/>
            <person name="Tang S."/>
            <person name="Taylor M.S."/>
            <person name="Tegner J."/>
            <person name="Teichmann S.A."/>
            <person name="Ueda H.R."/>
            <person name="van Nimwegen E."/>
            <person name="Verardo R."/>
            <person name="Wei C.L."/>
            <person name="Yagi K."/>
            <person name="Yamanishi H."/>
            <person name="Zabarovsky E."/>
            <person name="Zhu S."/>
            <person name="Zimmer A."/>
            <person name="Hide W."/>
            <person name="Bult C."/>
            <person name="Grimmond S.M."/>
            <person name="Teasdale R.D."/>
            <person name="Liu E.T."/>
            <person name="Brusic V."/>
            <person name="Quackenbush J."/>
            <person name="Wahlestedt C."/>
            <person name="Mattick J.S."/>
            <person name="Hume D.A."/>
            <person name="Kai C."/>
            <person name="Sasaki D."/>
            <person name="Tomaru Y."/>
            <person name="Fukuda S."/>
            <person name="Kanamori-Katayama M."/>
            <person name="Suzuki M."/>
            <person name="Aoki J."/>
            <person name="Arakawa T."/>
            <person name="Iida J."/>
            <person name="Imamura K."/>
            <person name="Itoh M."/>
            <person name="Kato T."/>
            <person name="Kawaji H."/>
            <person name="Kawagashira N."/>
            <person name="Kawashima T."/>
            <person name="Kojima M."/>
            <person name="Kondo S."/>
            <person name="Konno H."/>
            <person name="Nakano K."/>
            <person name="Ninomiya N."/>
            <person name="Nishio T."/>
            <person name="Okada M."/>
            <person name="Plessy C."/>
            <person name="Shibata K."/>
            <person name="Shiraki T."/>
            <person name="Suzuki S."/>
            <person name="Tagami M."/>
            <person name="Waki K."/>
            <person name="Watahiki A."/>
            <person name="Okamura-Oho Y."/>
            <person name="Suzuki H."/>
            <person name="Kawai J."/>
            <person name="Hayashizaki Y."/>
        </authorList>
    </citation>
    <scope>NUCLEOTIDE SEQUENCE [LARGE SCALE MRNA]</scope>
    <source>
        <strain>C57BL/6J</strain>
        <tissue>Diencephalon</tissue>
        <tissue>Olfactory bulb</tissue>
    </source>
</reference>
<reference key="3">
    <citation type="journal article" date="2004" name="Genome Res.">
        <title>The status, quality, and expansion of the NIH full-length cDNA project: the Mammalian Gene Collection (MGC).</title>
        <authorList>
            <consortium name="The MGC Project Team"/>
        </authorList>
    </citation>
    <scope>NUCLEOTIDE SEQUENCE [LARGE SCALE MRNA]</scope>
    <source>
        <strain>C57BL/6J</strain>
        <tissue>Brain</tissue>
    </source>
</reference>
<dbReference type="EMBL" id="AY164459">
    <property type="protein sequence ID" value="AAO26442.1"/>
    <property type="molecule type" value="mRNA"/>
</dbReference>
<dbReference type="EMBL" id="AK032204">
    <property type="protein sequence ID" value="BAC27756.1"/>
    <property type="molecule type" value="mRNA"/>
</dbReference>
<dbReference type="EMBL" id="AK034240">
    <property type="protein sequence ID" value="BAC28644.1"/>
    <property type="molecule type" value="mRNA"/>
</dbReference>
<dbReference type="EMBL" id="AK034077">
    <property type="protein sequence ID" value="BAC28573.1"/>
    <property type="molecule type" value="mRNA"/>
</dbReference>
<dbReference type="EMBL" id="BC075646">
    <property type="protein sequence ID" value="AAH75646.1"/>
    <property type="molecule type" value="mRNA"/>
</dbReference>
<dbReference type="CCDS" id="CCDS39970.1"/>
<dbReference type="RefSeq" id="NP_848820.4">
    <property type="nucleotide sequence ID" value="NM_178705.5"/>
</dbReference>
<dbReference type="SMR" id="Q8BGY3"/>
<dbReference type="BioGRID" id="231397">
    <property type="interactions" value="1"/>
</dbReference>
<dbReference type="FunCoup" id="Q8BGY3">
    <property type="interactions" value="14"/>
</dbReference>
<dbReference type="STRING" id="10090.ENSMUSP00000080979"/>
<dbReference type="GlyConnect" id="2476">
    <property type="glycosylation" value="3 N-Linked glycans (1 site)"/>
</dbReference>
<dbReference type="GlyCosmos" id="Q8BGY3">
    <property type="glycosylation" value="2 sites, 3 glycans"/>
</dbReference>
<dbReference type="GlyGen" id="Q8BGY3">
    <property type="glycosylation" value="3 sites, 4 N-linked glycans (1 site)"/>
</dbReference>
<dbReference type="iPTMnet" id="Q8BGY3"/>
<dbReference type="PhosphoSitePlus" id="Q8BGY3"/>
<dbReference type="PaxDb" id="10090-ENSMUSP00000080979"/>
<dbReference type="ProteomicsDB" id="295730"/>
<dbReference type="Antibodypedia" id="64358">
    <property type="antibodies" value="90 antibodies from 17 providers"/>
</dbReference>
<dbReference type="DNASU" id="233271"/>
<dbReference type="Ensembl" id="ENSMUST00000082373.8">
    <property type="protein sequence ID" value="ENSMUSP00000080979.7"/>
    <property type="gene ID" value="ENSMUSG00000063297.8"/>
</dbReference>
<dbReference type="GeneID" id="233271"/>
<dbReference type="KEGG" id="mmu:233271"/>
<dbReference type="UCSC" id="uc009hcw.1">
    <property type="organism name" value="mouse"/>
</dbReference>
<dbReference type="AGR" id="MGI:1889615"/>
<dbReference type="CTD" id="338645"/>
<dbReference type="MGI" id="MGI:1889615">
    <property type="gene designation" value="Luzp2"/>
</dbReference>
<dbReference type="VEuPathDB" id="HostDB:ENSMUSG00000063297"/>
<dbReference type="eggNOG" id="ENOG502QV95">
    <property type="taxonomic scope" value="Eukaryota"/>
</dbReference>
<dbReference type="GeneTree" id="ENSGT00390000013180"/>
<dbReference type="HOGENOM" id="CLU_068900_0_0_1"/>
<dbReference type="InParanoid" id="Q8BGY3"/>
<dbReference type="OMA" id="EGKTCSM"/>
<dbReference type="OrthoDB" id="8767066at2759"/>
<dbReference type="PhylomeDB" id="Q8BGY3"/>
<dbReference type="TreeFam" id="TF331644"/>
<dbReference type="BioGRID-ORCS" id="233271">
    <property type="hits" value="3 hits in 79 CRISPR screens"/>
</dbReference>
<dbReference type="ChiTaRS" id="Luzp2">
    <property type="organism name" value="mouse"/>
</dbReference>
<dbReference type="PRO" id="PR:Q8BGY3"/>
<dbReference type="Proteomes" id="UP000000589">
    <property type="component" value="Chromosome 7"/>
</dbReference>
<dbReference type="RNAct" id="Q8BGY3">
    <property type="molecule type" value="protein"/>
</dbReference>
<dbReference type="Bgee" id="ENSMUSG00000063297">
    <property type="expression patterns" value="Expressed in cerebellar cortex and 45 other cell types or tissues"/>
</dbReference>
<dbReference type="GO" id="GO:0005576">
    <property type="term" value="C:extracellular region"/>
    <property type="evidence" value="ECO:0007669"/>
    <property type="project" value="UniProtKB-SubCell"/>
</dbReference>
<dbReference type="InterPro" id="IPR026718">
    <property type="entry name" value="Luzp2"/>
</dbReference>
<dbReference type="PANTHER" id="PTHR22414">
    <property type="entry name" value="LEUCINE ZIPPER PROTEIN 2"/>
    <property type="match status" value="1"/>
</dbReference>
<dbReference type="PANTHER" id="PTHR22414:SF0">
    <property type="entry name" value="LEUCINE ZIPPER PROTEIN 2"/>
    <property type="match status" value="1"/>
</dbReference>
<evidence type="ECO:0000255" key="1"/>
<evidence type="ECO:0000256" key="2">
    <source>
        <dbReference type="SAM" id="MobiDB-lite"/>
    </source>
</evidence>
<evidence type="ECO:0000269" key="3">
    <source>
    </source>
</evidence>
<evidence type="ECO:0000305" key="4"/>
<sequence>MKFNAAHYLLPLLPALVLSTRQDYEELEKQLKEVFKERSTVLRQLTKTSRELDGIKVNLQSLKNDEQSSKTDVQKLLELGQRQREEMKSLQEALQNQLKETSEKAEKHQATINFLKTEVERKSKMIRDLQNENKSLKNKLLSGSKLCGIHAEESKKIQAQLKELRYGKKDLLFKAQQLTELEQKLAVAKNELEKAALDRESQMKAMKETVQLCLSSVFRDQPPPLSLMPSNPTQMLHPPRTVASRIPEARTKSKPQPSSPGHHDSSQVQATKEESRRPSVCGPQDEGSSCLVKHEEGPQSNSTAESELTTQKLQMPICSECEEKKGPENPSASFDGTPAREEKLL</sequence>
<name>LUZP2_MOUSE</name>
<comment type="subcellular location">
    <subcellularLocation>
        <location evidence="4">Secreted</location>
    </subcellularLocation>
</comment>
<comment type="tissue specificity">
    <text evidence="3">Expression found only in the brain and spinal cord.</text>
</comment>
<organism>
    <name type="scientific">Mus musculus</name>
    <name type="common">Mouse</name>
    <dbReference type="NCBI Taxonomy" id="10090"/>
    <lineage>
        <taxon>Eukaryota</taxon>
        <taxon>Metazoa</taxon>
        <taxon>Chordata</taxon>
        <taxon>Craniata</taxon>
        <taxon>Vertebrata</taxon>
        <taxon>Euteleostomi</taxon>
        <taxon>Mammalia</taxon>
        <taxon>Eutheria</taxon>
        <taxon>Euarchontoglires</taxon>
        <taxon>Glires</taxon>
        <taxon>Rodentia</taxon>
        <taxon>Myomorpha</taxon>
        <taxon>Muroidea</taxon>
        <taxon>Muridae</taxon>
        <taxon>Murinae</taxon>
        <taxon>Mus</taxon>
        <taxon>Mus</taxon>
    </lineage>
</organism>
<feature type="signal peptide" evidence="1">
    <location>
        <begin position="1"/>
        <end position="19"/>
    </location>
</feature>
<feature type="chain" id="PRO_0000315275" description="Leucine zipper protein 2">
    <location>
        <begin position="20"/>
        <end position="345"/>
    </location>
</feature>
<feature type="region of interest" description="Leucine-zipper">
    <location>
        <begin position="164"/>
        <end position="192"/>
    </location>
</feature>
<feature type="region of interest" description="Disordered" evidence="2">
    <location>
        <begin position="223"/>
        <end position="345"/>
    </location>
</feature>
<feature type="coiled-coil region" evidence="1">
    <location>
        <begin position="16"/>
        <end position="211"/>
    </location>
</feature>
<feature type="compositionally biased region" description="Basic and acidic residues" evidence="2">
    <location>
        <begin position="261"/>
        <end position="277"/>
    </location>
</feature>
<feature type="compositionally biased region" description="Polar residues" evidence="2">
    <location>
        <begin position="298"/>
        <end position="313"/>
    </location>
</feature>
<feature type="glycosylation site" description="N-linked (GlcNAc...) asparagine" evidence="1">
    <location>
        <position position="133"/>
    </location>
</feature>
<feature type="glycosylation site" description="N-linked (GlcNAc...) asparagine" evidence="1">
    <location>
        <position position="301"/>
    </location>
</feature>
<feature type="sequence conflict" description="In Ref. 2; BAC28644." evidence="4" ref="2">
    <original>E</original>
    <variation>Q</variation>
    <location>
        <position position="26"/>
    </location>
</feature>
<feature type="sequence conflict" description="In Ref. 1; AAO26442." evidence="4" ref="1">
    <original>A</original>
    <variation>G</variation>
    <location>
        <position position="243"/>
    </location>
</feature>
<feature type="sequence conflict" description="In Ref. 1; AAO26442." evidence="4" ref="1">
    <original>Q</original>
    <variation>R</variation>
    <location>
        <position position="269"/>
    </location>
</feature>
<keyword id="KW-0175">Coiled coil</keyword>
<keyword id="KW-0325">Glycoprotein</keyword>
<keyword id="KW-1185">Reference proteome</keyword>
<keyword id="KW-0964">Secreted</keyword>
<keyword id="KW-0732">Signal</keyword>